<feature type="chain" id="PRO_0000102535" description="Endoribonuclease YbeY">
    <location>
        <begin position="1"/>
        <end position="165"/>
    </location>
</feature>
<feature type="binding site" evidence="1">
    <location>
        <position position="130"/>
    </location>
    <ligand>
        <name>Zn(2+)</name>
        <dbReference type="ChEBI" id="CHEBI:29105"/>
        <note>catalytic</note>
    </ligand>
</feature>
<feature type="binding site" evidence="1">
    <location>
        <position position="134"/>
    </location>
    <ligand>
        <name>Zn(2+)</name>
        <dbReference type="ChEBI" id="CHEBI:29105"/>
        <note>catalytic</note>
    </ligand>
</feature>
<feature type="binding site" evidence="1">
    <location>
        <position position="140"/>
    </location>
    <ligand>
        <name>Zn(2+)</name>
        <dbReference type="ChEBI" id="CHEBI:29105"/>
        <note>catalytic</note>
    </ligand>
</feature>
<keyword id="KW-0963">Cytoplasm</keyword>
<keyword id="KW-0255">Endonuclease</keyword>
<keyword id="KW-0378">Hydrolase</keyword>
<keyword id="KW-0479">Metal-binding</keyword>
<keyword id="KW-0540">Nuclease</keyword>
<keyword id="KW-0690">Ribosome biogenesis</keyword>
<keyword id="KW-0698">rRNA processing</keyword>
<keyword id="KW-0862">Zinc</keyword>
<reference key="1">
    <citation type="journal article" date="2002" name="Mol. Microbiol.">
        <title>Genome sequence of Streptococcus agalactiae, a pathogen causing invasive neonatal disease.</title>
        <authorList>
            <person name="Glaser P."/>
            <person name="Rusniok C."/>
            <person name="Buchrieser C."/>
            <person name="Chevalier F."/>
            <person name="Frangeul L."/>
            <person name="Msadek T."/>
            <person name="Zouine M."/>
            <person name="Couve E."/>
            <person name="Lalioui L."/>
            <person name="Poyart C."/>
            <person name="Trieu-Cuot P."/>
            <person name="Kunst F."/>
        </authorList>
    </citation>
    <scope>NUCLEOTIDE SEQUENCE [LARGE SCALE GENOMIC DNA]</scope>
    <source>
        <strain>NEM316</strain>
    </source>
</reference>
<proteinExistence type="inferred from homology"/>
<organism>
    <name type="scientific">Streptococcus agalactiae serotype III (strain NEM316)</name>
    <dbReference type="NCBI Taxonomy" id="211110"/>
    <lineage>
        <taxon>Bacteria</taxon>
        <taxon>Bacillati</taxon>
        <taxon>Bacillota</taxon>
        <taxon>Bacilli</taxon>
        <taxon>Lactobacillales</taxon>
        <taxon>Streptococcaceae</taxon>
        <taxon>Streptococcus</taxon>
    </lineage>
</organism>
<name>YBEY_STRA3</name>
<evidence type="ECO:0000255" key="1">
    <source>
        <dbReference type="HAMAP-Rule" id="MF_00009"/>
    </source>
</evidence>
<gene>
    <name evidence="1" type="primary">ybeY</name>
    <name type="ordered locus">gbs1562</name>
</gene>
<accession>P67138</accession>
<accession>Q8DYH9</accession>
<accession>Q8E441</accession>
<comment type="function">
    <text evidence="1">Single strand-specific metallo-endoribonuclease involved in late-stage 70S ribosome quality control and in maturation of the 3' terminus of the 16S rRNA.</text>
</comment>
<comment type="cofactor">
    <cofactor evidence="1">
        <name>Zn(2+)</name>
        <dbReference type="ChEBI" id="CHEBI:29105"/>
    </cofactor>
    <text evidence="1">Binds 1 zinc ion.</text>
</comment>
<comment type="subcellular location">
    <subcellularLocation>
        <location evidence="1">Cytoplasm</location>
    </subcellularLocation>
</comment>
<comment type="similarity">
    <text evidence="1">Belongs to the endoribonuclease YbeY family.</text>
</comment>
<dbReference type="EC" id="3.1.-.-" evidence="1"/>
<dbReference type="EMBL" id="AL766852">
    <property type="protein sequence ID" value="CAD47221.1"/>
    <property type="molecule type" value="Genomic_DNA"/>
</dbReference>
<dbReference type="RefSeq" id="WP_001867191.1">
    <property type="nucleotide sequence ID" value="NC_004368.1"/>
</dbReference>
<dbReference type="SMR" id="P67138"/>
<dbReference type="KEGG" id="san:gbs1562"/>
<dbReference type="eggNOG" id="COG0319">
    <property type="taxonomic scope" value="Bacteria"/>
</dbReference>
<dbReference type="HOGENOM" id="CLU_106710_3_0_9"/>
<dbReference type="Proteomes" id="UP000000823">
    <property type="component" value="Chromosome"/>
</dbReference>
<dbReference type="GO" id="GO:0005737">
    <property type="term" value="C:cytoplasm"/>
    <property type="evidence" value="ECO:0007669"/>
    <property type="project" value="UniProtKB-SubCell"/>
</dbReference>
<dbReference type="GO" id="GO:0004222">
    <property type="term" value="F:metalloendopeptidase activity"/>
    <property type="evidence" value="ECO:0007669"/>
    <property type="project" value="InterPro"/>
</dbReference>
<dbReference type="GO" id="GO:0004521">
    <property type="term" value="F:RNA endonuclease activity"/>
    <property type="evidence" value="ECO:0007669"/>
    <property type="project" value="UniProtKB-UniRule"/>
</dbReference>
<dbReference type="GO" id="GO:0008270">
    <property type="term" value="F:zinc ion binding"/>
    <property type="evidence" value="ECO:0007669"/>
    <property type="project" value="UniProtKB-UniRule"/>
</dbReference>
<dbReference type="GO" id="GO:0006364">
    <property type="term" value="P:rRNA processing"/>
    <property type="evidence" value="ECO:0007669"/>
    <property type="project" value="UniProtKB-UniRule"/>
</dbReference>
<dbReference type="Gene3D" id="3.40.390.30">
    <property type="entry name" value="Metalloproteases ('zincins'), catalytic domain"/>
    <property type="match status" value="1"/>
</dbReference>
<dbReference type="HAMAP" id="MF_00009">
    <property type="entry name" value="Endoribonucl_YbeY"/>
    <property type="match status" value="1"/>
</dbReference>
<dbReference type="InterPro" id="IPR023091">
    <property type="entry name" value="MetalPrtase_cat_dom_sf_prd"/>
</dbReference>
<dbReference type="InterPro" id="IPR002036">
    <property type="entry name" value="YbeY"/>
</dbReference>
<dbReference type="InterPro" id="IPR020549">
    <property type="entry name" value="YbeY_CS"/>
</dbReference>
<dbReference type="NCBIfam" id="TIGR00043">
    <property type="entry name" value="rRNA maturation RNase YbeY"/>
    <property type="match status" value="1"/>
</dbReference>
<dbReference type="PANTHER" id="PTHR46986">
    <property type="entry name" value="ENDORIBONUCLEASE YBEY, CHLOROPLASTIC"/>
    <property type="match status" value="1"/>
</dbReference>
<dbReference type="PANTHER" id="PTHR46986:SF1">
    <property type="entry name" value="ENDORIBONUCLEASE YBEY, CHLOROPLASTIC"/>
    <property type="match status" value="1"/>
</dbReference>
<dbReference type="Pfam" id="PF02130">
    <property type="entry name" value="YbeY"/>
    <property type="match status" value="1"/>
</dbReference>
<dbReference type="SUPFAM" id="SSF55486">
    <property type="entry name" value="Metalloproteases ('zincins'), catalytic domain"/>
    <property type="match status" value="1"/>
</dbReference>
<dbReference type="PROSITE" id="PS01306">
    <property type="entry name" value="UPF0054"/>
    <property type="match status" value="1"/>
</dbReference>
<protein>
    <recommendedName>
        <fullName evidence="1">Endoribonuclease YbeY</fullName>
        <ecNumber evidence="1">3.1.-.-</ecNumber>
    </recommendedName>
</protein>
<sequence>MYVEMIDETGQVSEDIKKQTLDLLEFAAQKTGKENKEMAVTFVTNERSHELNLEYRDTDRPTDVISLEYKPEVDISFDEEDLAENPELAEMLEDFDSYIGELFISIDKAKEQAEEYGHSYEREMGFLAVHGFLHINGYDHYTPEEEKEMFSLQEEILTAYGLKRQ</sequence>